<proteinExistence type="inferred from homology"/>
<feature type="chain" id="PRO_0000364389" description="S-adenosylmethionine decarboxylase beta chain" evidence="1">
    <location>
        <begin position="1"/>
        <end position="111"/>
    </location>
</feature>
<feature type="chain" id="PRO_0000364390" description="S-adenosylmethionine decarboxylase alpha chain" evidence="1">
    <location>
        <begin position="112"/>
        <end position="264"/>
    </location>
</feature>
<feature type="active site" description="Schiff-base intermediate with substrate; via pyruvic acid" evidence="1">
    <location>
        <position position="112"/>
    </location>
</feature>
<feature type="active site" description="Proton acceptor; for processing activity" evidence="1">
    <location>
        <position position="117"/>
    </location>
</feature>
<feature type="active site" description="Proton donor; for catalytic activity" evidence="1">
    <location>
        <position position="140"/>
    </location>
</feature>
<feature type="site" description="Cleavage (non-hydrolytic); by autolysis" evidence="1">
    <location>
        <begin position="111"/>
        <end position="112"/>
    </location>
</feature>
<feature type="modified residue" description="Pyruvic acid (Ser); by autocatalysis" evidence="1">
    <location>
        <position position="112"/>
    </location>
</feature>
<comment type="function">
    <text evidence="1">Catalyzes the decarboxylation of S-adenosylmethionine to S-adenosylmethioninamine (dcAdoMet), the propylamine donor required for the synthesis of the polyamines spermine and spermidine from the diamine putrescine.</text>
</comment>
<comment type="catalytic activity">
    <reaction evidence="1">
        <text>S-adenosyl-L-methionine + H(+) = S-adenosyl 3-(methylsulfanyl)propylamine + CO2</text>
        <dbReference type="Rhea" id="RHEA:15981"/>
        <dbReference type="ChEBI" id="CHEBI:15378"/>
        <dbReference type="ChEBI" id="CHEBI:16526"/>
        <dbReference type="ChEBI" id="CHEBI:57443"/>
        <dbReference type="ChEBI" id="CHEBI:59789"/>
        <dbReference type="EC" id="4.1.1.50"/>
    </reaction>
</comment>
<comment type="cofactor">
    <cofactor evidence="1">
        <name>pyruvate</name>
        <dbReference type="ChEBI" id="CHEBI:15361"/>
    </cofactor>
    <text evidence="1">Binds 1 pyruvoyl group covalently per subunit.</text>
</comment>
<comment type="pathway">
    <text evidence="1">Amine and polyamine biosynthesis; S-adenosylmethioninamine biosynthesis; S-adenosylmethioninamine from S-adenosyl-L-methionine: step 1/1.</text>
</comment>
<comment type="subunit">
    <text evidence="1">Heterooctamer of four alpha and four beta chains arranged as a tetramer of alpha/beta heterodimers.</text>
</comment>
<comment type="PTM">
    <text evidence="1">Is synthesized initially as an inactive proenzyme. Formation of the active enzyme involves a self-maturation process in which the active site pyruvoyl group is generated from an internal serine residue via an autocatalytic post-translational modification. Two non-identical subunits are generated from the proenzyme in this reaction, and the pyruvate is formed at the N-terminus of the alpha chain, which is derived from the carboxyl end of the proenzyme. The post-translation cleavage follows an unusual pathway, termed non-hydrolytic serinolysis, in which the side chain hydroxyl group of the serine supplies its oxygen atom to form the C-terminus of the beta chain, while the remainder of the serine residue undergoes an oxidative deamination to produce ammonia and the pyruvoyl group blocking the N-terminus of the alpha chain.</text>
</comment>
<comment type="similarity">
    <text evidence="1">Belongs to the prokaryotic AdoMetDC family. Type 2 subfamily.</text>
</comment>
<comment type="sequence caution" evidence="2">
    <conflict type="erroneous initiation">
        <sequence resource="EMBL-CDS" id="ABR75586"/>
    </conflict>
</comment>
<sequence>MKKLKLHGFNNLTKSLSFCIYDICYAKTAEERDGYIAYIDELYNANRLTEILTETCSIIGANILNIARQDYEPQGASVTILVSEEPVDPKLIDQTEHPGPLPETVVAHLDKSHICVHTYPESHPEGGLCTFRADIEVSTCGVISPLKALNYLIHQLESDIVTIDYRVRGFTRDINGMKHFIDHEINSIQNFMSDDMKSLYDMVDVNVYQENIFHTKMLLKEFDLKHYMFHTRPEELTAEERKVITDLLWKEMREIYYGRNIPAV</sequence>
<accession>A6T4R5</accession>
<protein>
    <recommendedName>
        <fullName evidence="1">S-adenosylmethionine decarboxylase proenzyme</fullName>
        <shortName evidence="1">AdoMetDC</shortName>
        <shortName evidence="1">SAMDC</shortName>
        <ecNumber evidence="1">4.1.1.50</ecNumber>
    </recommendedName>
    <component>
        <recommendedName>
            <fullName evidence="1">S-adenosylmethionine decarboxylase beta chain</fullName>
        </recommendedName>
    </component>
    <component>
        <recommendedName>
            <fullName evidence="1">S-adenosylmethionine decarboxylase alpha chain</fullName>
        </recommendedName>
    </component>
</protein>
<gene>
    <name evidence="1" type="primary">speD</name>
    <name type="ordered locus">KPN78578_01250</name>
    <name type="ORF">KPN_00126</name>
</gene>
<reference key="1">
    <citation type="submission" date="2006-09" db="EMBL/GenBank/DDBJ databases">
        <authorList>
            <consortium name="The Klebsiella pneumonia Genome Sequencing Project"/>
            <person name="McClelland M."/>
            <person name="Sanderson E.K."/>
            <person name="Spieth J."/>
            <person name="Clifton W.S."/>
            <person name="Latreille P."/>
            <person name="Sabo A."/>
            <person name="Pepin K."/>
            <person name="Bhonagiri V."/>
            <person name="Porwollik S."/>
            <person name="Ali J."/>
            <person name="Wilson R.K."/>
        </authorList>
    </citation>
    <scope>NUCLEOTIDE SEQUENCE [LARGE SCALE GENOMIC DNA]</scope>
    <source>
        <strain>ATCC 700721 / MGH 78578</strain>
    </source>
</reference>
<keyword id="KW-0068">Autocatalytic cleavage</keyword>
<keyword id="KW-0210">Decarboxylase</keyword>
<keyword id="KW-0456">Lyase</keyword>
<keyword id="KW-0620">Polyamine biosynthesis</keyword>
<keyword id="KW-0670">Pyruvate</keyword>
<keyword id="KW-0949">S-adenosyl-L-methionine</keyword>
<keyword id="KW-0704">Schiff base</keyword>
<keyword id="KW-0745">Spermidine biosynthesis</keyword>
<keyword id="KW-0865">Zymogen</keyword>
<name>SPED_KLEP7</name>
<organism>
    <name type="scientific">Klebsiella pneumoniae subsp. pneumoniae (strain ATCC 700721 / MGH 78578)</name>
    <dbReference type="NCBI Taxonomy" id="272620"/>
    <lineage>
        <taxon>Bacteria</taxon>
        <taxon>Pseudomonadati</taxon>
        <taxon>Pseudomonadota</taxon>
        <taxon>Gammaproteobacteria</taxon>
        <taxon>Enterobacterales</taxon>
        <taxon>Enterobacteriaceae</taxon>
        <taxon>Klebsiella/Raoultella group</taxon>
        <taxon>Klebsiella</taxon>
        <taxon>Klebsiella pneumoniae complex</taxon>
    </lineage>
</organism>
<evidence type="ECO:0000255" key="1">
    <source>
        <dbReference type="HAMAP-Rule" id="MF_00465"/>
    </source>
</evidence>
<evidence type="ECO:0000305" key="2"/>
<dbReference type="EC" id="4.1.1.50" evidence="1"/>
<dbReference type="EMBL" id="CP000647">
    <property type="protein sequence ID" value="ABR75586.1"/>
    <property type="status" value="ALT_INIT"/>
    <property type="molecule type" value="Genomic_DNA"/>
</dbReference>
<dbReference type="RefSeq" id="WP_002888739.1">
    <property type="nucleotide sequence ID" value="NC_009648.1"/>
</dbReference>
<dbReference type="STRING" id="272620.KPN_00126"/>
<dbReference type="jPOST" id="A6T4R5"/>
<dbReference type="PaxDb" id="272620-KPN_00126"/>
<dbReference type="EnsemblBacteria" id="ABR75586">
    <property type="protein sequence ID" value="ABR75586"/>
    <property type="gene ID" value="KPN_00126"/>
</dbReference>
<dbReference type="KEGG" id="kpn:KPN_00126"/>
<dbReference type="HOGENOM" id="CLU_092007_0_0_6"/>
<dbReference type="UniPathway" id="UPA00331">
    <property type="reaction ID" value="UER00451"/>
</dbReference>
<dbReference type="Proteomes" id="UP000000265">
    <property type="component" value="Chromosome"/>
</dbReference>
<dbReference type="GO" id="GO:0005829">
    <property type="term" value="C:cytosol"/>
    <property type="evidence" value="ECO:0007669"/>
    <property type="project" value="TreeGrafter"/>
</dbReference>
<dbReference type="GO" id="GO:0004014">
    <property type="term" value="F:adenosylmethionine decarboxylase activity"/>
    <property type="evidence" value="ECO:0007669"/>
    <property type="project" value="UniProtKB-UniRule"/>
</dbReference>
<dbReference type="GO" id="GO:0008295">
    <property type="term" value="P:spermidine biosynthetic process"/>
    <property type="evidence" value="ECO:0007669"/>
    <property type="project" value="UniProtKB-UniRule"/>
</dbReference>
<dbReference type="FunFam" id="3.60.90.10:FF:000001">
    <property type="entry name" value="S-adenosylmethionine decarboxylase proenzyme"/>
    <property type="match status" value="1"/>
</dbReference>
<dbReference type="Gene3D" id="3.60.90.10">
    <property type="entry name" value="S-adenosylmethionine decarboxylase"/>
    <property type="match status" value="1"/>
</dbReference>
<dbReference type="HAMAP" id="MF_00465">
    <property type="entry name" value="AdoMetDC_2"/>
    <property type="match status" value="1"/>
</dbReference>
<dbReference type="InterPro" id="IPR003826">
    <property type="entry name" value="AdoMetDC_fam_prok"/>
</dbReference>
<dbReference type="InterPro" id="IPR009165">
    <property type="entry name" value="S-AdoMet_deCO2ase_bac"/>
</dbReference>
<dbReference type="InterPro" id="IPR016067">
    <property type="entry name" value="S-AdoMet_deCO2ase_core"/>
</dbReference>
<dbReference type="NCBIfam" id="TIGR03331">
    <property type="entry name" value="SAM_DCase_Eco"/>
    <property type="match status" value="1"/>
</dbReference>
<dbReference type="PANTHER" id="PTHR33866">
    <property type="entry name" value="S-ADENOSYLMETHIONINE DECARBOXYLASE PROENZYME"/>
    <property type="match status" value="1"/>
</dbReference>
<dbReference type="PANTHER" id="PTHR33866:SF1">
    <property type="entry name" value="S-ADENOSYLMETHIONINE DECARBOXYLASE PROENZYME"/>
    <property type="match status" value="1"/>
</dbReference>
<dbReference type="Pfam" id="PF02675">
    <property type="entry name" value="AdoMet_dc"/>
    <property type="match status" value="1"/>
</dbReference>
<dbReference type="PIRSF" id="PIRSF001356">
    <property type="entry name" value="SAM_decarboxylas"/>
    <property type="match status" value="1"/>
</dbReference>
<dbReference type="SUPFAM" id="SSF56276">
    <property type="entry name" value="S-adenosylmethionine decarboxylase"/>
    <property type="match status" value="1"/>
</dbReference>